<reference key="1">
    <citation type="journal article" date="2005" name="J. Bacteriol.">
        <title>Genomic sequence of an otitis media isolate of nontypeable Haemophilus influenzae: comparative study with H. influenzae serotype d, strain KW20.</title>
        <authorList>
            <person name="Harrison A."/>
            <person name="Dyer D.W."/>
            <person name="Gillaspy A."/>
            <person name="Ray W.C."/>
            <person name="Mungur R."/>
            <person name="Carson M.B."/>
            <person name="Zhong H."/>
            <person name="Gipson J."/>
            <person name="Gipson M."/>
            <person name="Johnson L.S."/>
            <person name="Lewis L."/>
            <person name="Bakaletz L.O."/>
            <person name="Munson R.S. Jr."/>
        </authorList>
    </citation>
    <scope>NUCLEOTIDE SEQUENCE [LARGE SCALE GENOMIC DNA]</scope>
    <source>
        <strain>86-028NP</strain>
    </source>
</reference>
<protein>
    <recommendedName>
        <fullName evidence="1">Na(+)-translocating NADH-quinone reductase subunit D</fullName>
        <shortName evidence="1">Na(+)-NQR subunit D</shortName>
        <shortName evidence="1">Na(+)-translocating NQR subunit D</shortName>
        <ecNumber evidence="1">7.2.1.1</ecNumber>
    </recommendedName>
    <alternativeName>
        <fullName evidence="1">NQR complex subunit D</fullName>
    </alternativeName>
    <alternativeName>
        <fullName evidence="1">NQR-1 subunit D</fullName>
    </alternativeName>
</protein>
<feature type="chain" id="PRO_1000060152" description="Na(+)-translocating NADH-quinone reductase subunit D">
    <location>
        <begin position="1"/>
        <end position="208"/>
    </location>
</feature>
<feature type="transmembrane region" description="Helical" evidence="1">
    <location>
        <begin position="42"/>
        <end position="62"/>
    </location>
</feature>
<feature type="transmembrane region" description="Helical" evidence="1">
    <location>
        <begin position="72"/>
        <end position="92"/>
    </location>
</feature>
<feature type="transmembrane region" description="Helical" evidence="1">
    <location>
        <begin position="103"/>
        <end position="123"/>
    </location>
</feature>
<feature type="transmembrane region" description="Helical" evidence="1">
    <location>
        <begin position="131"/>
        <end position="151"/>
    </location>
</feature>
<feature type="transmembrane region" description="Helical" evidence="1">
    <location>
        <begin position="178"/>
        <end position="198"/>
    </location>
</feature>
<comment type="function">
    <text evidence="1">NQR complex catalyzes the reduction of ubiquinone-1 to ubiquinol by two successive reactions, coupled with the transport of Na(+) ions from the cytoplasm to the periplasm. NqrA to NqrE are probably involved in the second step, the conversion of ubisemiquinone to ubiquinol.</text>
</comment>
<comment type="catalytic activity">
    <reaction evidence="1">
        <text>a ubiquinone + n Na(+)(in) + NADH + H(+) = a ubiquinol + n Na(+)(out) + NAD(+)</text>
        <dbReference type="Rhea" id="RHEA:47748"/>
        <dbReference type="Rhea" id="RHEA-COMP:9565"/>
        <dbReference type="Rhea" id="RHEA-COMP:9566"/>
        <dbReference type="ChEBI" id="CHEBI:15378"/>
        <dbReference type="ChEBI" id="CHEBI:16389"/>
        <dbReference type="ChEBI" id="CHEBI:17976"/>
        <dbReference type="ChEBI" id="CHEBI:29101"/>
        <dbReference type="ChEBI" id="CHEBI:57540"/>
        <dbReference type="ChEBI" id="CHEBI:57945"/>
        <dbReference type="EC" id="7.2.1.1"/>
    </reaction>
</comment>
<comment type="subunit">
    <text evidence="1">Composed of six subunits; NqrA, NqrB, NqrC, NqrD, NqrE and NqrF.</text>
</comment>
<comment type="subcellular location">
    <subcellularLocation>
        <location evidence="1">Cell inner membrane</location>
        <topology evidence="1">Multi-pass membrane protein</topology>
    </subcellularLocation>
</comment>
<comment type="similarity">
    <text evidence="1">Belongs to the NqrDE/RnfAE family.</text>
</comment>
<dbReference type="EC" id="7.2.1.1" evidence="1"/>
<dbReference type="EMBL" id="CP000057">
    <property type="protein sequence ID" value="AAX87226.1"/>
    <property type="molecule type" value="Genomic_DNA"/>
</dbReference>
<dbReference type="RefSeq" id="WP_005648665.1">
    <property type="nucleotide sequence ID" value="NC_007146.2"/>
</dbReference>
<dbReference type="SMR" id="Q4QP21"/>
<dbReference type="GeneID" id="93219104"/>
<dbReference type="KEGG" id="hit:NTHI0257"/>
<dbReference type="HOGENOM" id="CLU_046659_1_1_6"/>
<dbReference type="Proteomes" id="UP000002525">
    <property type="component" value="Chromosome"/>
</dbReference>
<dbReference type="GO" id="GO:0005886">
    <property type="term" value="C:plasma membrane"/>
    <property type="evidence" value="ECO:0007669"/>
    <property type="project" value="UniProtKB-SubCell"/>
</dbReference>
<dbReference type="GO" id="GO:0016655">
    <property type="term" value="F:oxidoreductase activity, acting on NAD(P)H, quinone or similar compound as acceptor"/>
    <property type="evidence" value="ECO:0007669"/>
    <property type="project" value="UniProtKB-UniRule"/>
</dbReference>
<dbReference type="GO" id="GO:0006814">
    <property type="term" value="P:sodium ion transport"/>
    <property type="evidence" value="ECO:0007669"/>
    <property type="project" value="UniProtKB-UniRule"/>
</dbReference>
<dbReference type="HAMAP" id="MF_00428">
    <property type="entry name" value="NqrD"/>
    <property type="match status" value="1"/>
</dbReference>
<dbReference type="InterPro" id="IPR011292">
    <property type="entry name" value="NqrD"/>
</dbReference>
<dbReference type="InterPro" id="IPR003667">
    <property type="entry name" value="NqrDE/RnfAE"/>
</dbReference>
<dbReference type="NCBIfam" id="TIGR01939">
    <property type="entry name" value="nqrD"/>
    <property type="match status" value="1"/>
</dbReference>
<dbReference type="NCBIfam" id="NF006777">
    <property type="entry name" value="PRK09292.1"/>
    <property type="match status" value="1"/>
</dbReference>
<dbReference type="NCBIfam" id="NF009070">
    <property type="entry name" value="PRK12405.1"/>
    <property type="match status" value="1"/>
</dbReference>
<dbReference type="PANTHER" id="PTHR30586">
    <property type="entry name" value="ELECTRON TRANSPORT COMPLEX PROTEIN RNFE"/>
    <property type="match status" value="1"/>
</dbReference>
<dbReference type="PANTHER" id="PTHR30586:SF1">
    <property type="entry name" value="NA(+)-TRANSLOCATING NADH-QUINONE REDUCTASE SUBUNIT D"/>
    <property type="match status" value="1"/>
</dbReference>
<dbReference type="Pfam" id="PF02508">
    <property type="entry name" value="Rnf-Nqr"/>
    <property type="match status" value="1"/>
</dbReference>
<dbReference type="PIRSF" id="PIRSF006102">
    <property type="entry name" value="NQR_DE"/>
    <property type="match status" value="1"/>
</dbReference>
<keyword id="KW-0997">Cell inner membrane</keyword>
<keyword id="KW-1003">Cell membrane</keyword>
<keyword id="KW-0406">Ion transport</keyword>
<keyword id="KW-0472">Membrane</keyword>
<keyword id="KW-0520">NAD</keyword>
<keyword id="KW-0915">Sodium</keyword>
<keyword id="KW-0739">Sodium transport</keyword>
<keyword id="KW-1278">Translocase</keyword>
<keyword id="KW-0812">Transmembrane</keyword>
<keyword id="KW-1133">Transmembrane helix</keyword>
<keyword id="KW-0813">Transport</keyword>
<keyword id="KW-0830">Ubiquinone</keyword>
<proteinExistence type="inferred from homology"/>
<accession>Q4QP21</accession>
<organism>
    <name type="scientific">Haemophilus influenzae (strain 86-028NP)</name>
    <dbReference type="NCBI Taxonomy" id="281310"/>
    <lineage>
        <taxon>Bacteria</taxon>
        <taxon>Pseudomonadati</taxon>
        <taxon>Pseudomonadota</taxon>
        <taxon>Gammaproteobacteria</taxon>
        <taxon>Pasteurellales</taxon>
        <taxon>Pasteurellaceae</taxon>
        <taxon>Haemophilus</taxon>
    </lineage>
</organism>
<evidence type="ECO:0000255" key="1">
    <source>
        <dbReference type="HAMAP-Rule" id="MF_00428"/>
    </source>
</evidence>
<sequence length="208" mass="22528">MSGKTSYKDLLLAPIAKNNPIALQILGICSALAVTTKLETAFVMAIAVTLVTGLSNLFVSLIRNYIPNSIRIIVQLAIIASLVIVVDQILKAYAYGLSKQLSVFVGLIITNCIVMGRAEAFAMKSPPVESFVDGIGNGLGYGSMLIIVAFFRELIGSGKLFGMTIFETIQNGGWYQANGLFLLAPSAFFIIGFVIWGLRTWKPEQQEK</sequence>
<name>NQRD_HAEI8</name>
<gene>
    <name evidence="1" type="primary">nqrD</name>
    <name type="ordered locus">NTHI0257</name>
</gene>